<organism>
    <name type="scientific">Bifidobacterium longum (strain DJO10A)</name>
    <dbReference type="NCBI Taxonomy" id="205913"/>
    <lineage>
        <taxon>Bacteria</taxon>
        <taxon>Bacillati</taxon>
        <taxon>Actinomycetota</taxon>
        <taxon>Actinomycetes</taxon>
        <taxon>Bifidobacteriales</taxon>
        <taxon>Bifidobacteriaceae</taxon>
        <taxon>Bifidobacterium</taxon>
    </lineage>
</organism>
<evidence type="ECO:0000255" key="1">
    <source>
        <dbReference type="HAMAP-Rule" id="MF_01588"/>
    </source>
</evidence>
<evidence type="ECO:0000256" key="2">
    <source>
        <dbReference type="SAM" id="MobiDB-lite"/>
    </source>
</evidence>
<name>DNLJ_BIFLD</name>
<dbReference type="EC" id="6.5.1.2" evidence="1"/>
<dbReference type="EMBL" id="CP000605">
    <property type="protein sequence ID" value="ACD97512.1"/>
    <property type="molecule type" value="Genomic_DNA"/>
</dbReference>
<dbReference type="RefSeq" id="WP_010081305.1">
    <property type="nucleotide sequence ID" value="NC_010816.1"/>
</dbReference>
<dbReference type="SMR" id="B3DPR8"/>
<dbReference type="KEGG" id="blj:BLD_0066"/>
<dbReference type="HOGENOM" id="CLU_007764_1_1_11"/>
<dbReference type="Proteomes" id="UP000002419">
    <property type="component" value="Chromosome"/>
</dbReference>
<dbReference type="GO" id="GO:0005829">
    <property type="term" value="C:cytosol"/>
    <property type="evidence" value="ECO:0007669"/>
    <property type="project" value="TreeGrafter"/>
</dbReference>
<dbReference type="GO" id="GO:0003911">
    <property type="term" value="F:DNA ligase (NAD+) activity"/>
    <property type="evidence" value="ECO:0007669"/>
    <property type="project" value="UniProtKB-UniRule"/>
</dbReference>
<dbReference type="GO" id="GO:0046872">
    <property type="term" value="F:metal ion binding"/>
    <property type="evidence" value="ECO:0007669"/>
    <property type="project" value="UniProtKB-KW"/>
</dbReference>
<dbReference type="GO" id="GO:0006281">
    <property type="term" value="P:DNA repair"/>
    <property type="evidence" value="ECO:0007669"/>
    <property type="project" value="UniProtKB-KW"/>
</dbReference>
<dbReference type="GO" id="GO:0006260">
    <property type="term" value="P:DNA replication"/>
    <property type="evidence" value="ECO:0007669"/>
    <property type="project" value="UniProtKB-KW"/>
</dbReference>
<dbReference type="CDD" id="cd17748">
    <property type="entry name" value="BRCT_DNA_ligase_like"/>
    <property type="match status" value="1"/>
</dbReference>
<dbReference type="CDD" id="cd00114">
    <property type="entry name" value="LIGANc"/>
    <property type="match status" value="1"/>
</dbReference>
<dbReference type="FunFam" id="2.40.50.140:FF:000012">
    <property type="entry name" value="DNA ligase"/>
    <property type="match status" value="1"/>
</dbReference>
<dbReference type="FunFam" id="3.30.470.30:FF:000001">
    <property type="entry name" value="DNA ligase"/>
    <property type="match status" value="1"/>
</dbReference>
<dbReference type="FunFam" id="3.40.50.10190:FF:000054">
    <property type="entry name" value="DNA ligase"/>
    <property type="match status" value="1"/>
</dbReference>
<dbReference type="Gene3D" id="6.20.10.30">
    <property type="match status" value="1"/>
</dbReference>
<dbReference type="Gene3D" id="1.10.150.20">
    <property type="entry name" value="5' to 3' exonuclease, C-terminal subdomain"/>
    <property type="match status" value="2"/>
</dbReference>
<dbReference type="Gene3D" id="3.40.50.10190">
    <property type="entry name" value="BRCT domain"/>
    <property type="match status" value="1"/>
</dbReference>
<dbReference type="Gene3D" id="3.30.470.30">
    <property type="entry name" value="DNA ligase/mRNA capping enzyme"/>
    <property type="match status" value="1"/>
</dbReference>
<dbReference type="Gene3D" id="1.10.287.610">
    <property type="entry name" value="Helix hairpin bin"/>
    <property type="match status" value="1"/>
</dbReference>
<dbReference type="Gene3D" id="2.40.50.140">
    <property type="entry name" value="Nucleic acid-binding proteins"/>
    <property type="match status" value="1"/>
</dbReference>
<dbReference type="HAMAP" id="MF_01588">
    <property type="entry name" value="DNA_ligase_A"/>
    <property type="match status" value="1"/>
</dbReference>
<dbReference type="InterPro" id="IPR001357">
    <property type="entry name" value="BRCT_dom"/>
</dbReference>
<dbReference type="InterPro" id="IPR036420">
    <property type="entry name" value="BRCT_dom_sf"/>
</dbReference>
<dbReference type="InterPro" id="IPR041663">
    <property type="entry name" value="DisA/LigA_HHH"/>
</dbReference>
<dbReference type="InterPro" id="IPR001679">
    <property type="entry name" value="DNA_ligase"/>
</dbReference>
<dbReference type="InterPro" id="IPR018239">
    <property type="entry name" value="DNA_ligase_AS"/>
</dbReference>
<dbReference type="InterPro" id="IPR033136">
    <property type="entry name" value="DNA_ligase_CS"/>
</dbReference>
<dbReference type="InterPro" id="IPR013839">
    <property type="entry name" value="DNAligase_adenylation"/>
</dbReference>
<dbReference type="InterPro" id="IPR013840">
    <property type="entry name" value="DNAligase_N"/>
</dbReference>
<dbReference type="InterPro" id="IPR012340">
    <property type="entry name" value="NA-bd_OB-fold"/>
</dbReference>
<dbReference type="InterPro" id="IPR004150">
    <property type="entry name" value="NAD_DNA_ligase_OB"/>
</dbReference>
<dbReference type="InterPro" id="IPR010994">
    <property type="entry name" value="RuvA_2-like"/>
</dbReference>
<dbReference type="InterPro" id="IPR004149">
    <property type="entry name" value="Znf_DNAligase_C4"/>
</dbReference>
<dbReference type="NCBIfam" id="TIGR00575">
    <property type="entry name" value="dnlj"/>
    <property type="match status" value="1"/>
</dbReference>
<dbReference type="NCBIfam" id="NF005932">
    <property type="entry name" value="PRK07956.1"/>
    <property type="match status" value="1"/>
</dbReference>
<dbReference type="PANTHER" id="PTHR23389">
    <property type="entry name" value="CHROMOSOME TRANSMISSION FIDELITY FACTOR 18"/>
    <property type="match status" value="1"/>
</dbReference>
<dbReference type="PANTHER" id="PTHR23389:SF9">
    <property type="entry name" value="DNA LIGASE"/>
    <property type="match status" value="1"/>
</dbReference>
<dbReference type="Pfam" id="PF00533">
    <property type="entry name" value="BRCT"/>
    <property type="match status" value="1"/>
</dbReference>
<dbReference type="Pfam" id="PF01653">
    <property type="entry name" value="DNA_ligase_aden"/>
    <property type="match status" value="1"/>
</dbReference>
<dbReference type="Pfam" id="PF03120">
    <property type="entry name" value="DNA_ligase_OB"/>
    <property type="match status" value="1"/>
</dbReference>
<dbReference type="Pfam" id="PF03119">
    <property type="entry name" value="DNA_ligase_ZBD"/>
    <property type="match status" value="1"/>
</dbReference>
<dbReference type="Pfam" id="PF12826">
    <property type="entry name" value="HHH_2"/>
    <property type="match status" value="1"/>
</dbReference>
<dbReference type="SMART" id="SM00292">
    <property type="entry name" value="BRCT"/>
    <property type="match status" value="1"/>
</dbReference>
<dbReference type="SMART" id="SM00532">
    <property type="entry name" value="LIGANc"/>
    <property type="match status" value="1"/>
</dbReference>
<dbReference type="SUPFAM" id="SSF52113">
    <property type="entry name" value="BRCT domain"/>
    <property type="match status" value="1"/>
</dbReference>
<dbReference type="SUPFAM" id="SSF56091">
    <property type="entry name" value="DNA ligase/mRNA capping enzyme, catalytic domain"/>
    <property type="match status" value="1"/>
</dbReference>
<dbReference type="SUPFAM" id="SSF50249">
    <property type="entry name" value="Nucleic acid-binding proteins"/>
    <property type="match status" value="1"/>
</dbReference>
<dbReference type="SUPFAM" id="SSF47781">
    <property type="entry name" value="RuvA domain 2-like"/>
    <property type="match status" value="2"/>
</dbReference>
<dbReference type="PROSITE" id="PS50172">
    <property type="entry name" value="BRCT"/>
    <property type="match status" value="1"/>
</dbReference>
<dbReference type="PROSITE" id="PS01055">
    <property type="entry name" value="DNA_LIGASE_N1"/>
    <property type="match status" value="1"/>
</dbReference>
<dbReference type="PROSITE" id="PS01056">
    <property type="entry name" value="DNA_LIGASE_N2"/>
    <property type="match status" value="1"/>
</dbReference>
<protein>
    <recommendedName>
        <fullName evidence="1">DNA ligase</fullName>
        <ecNumber evidence="1">6.5.1.2</ecNumber>
    </recommendedName>
    <alternativeName>
        <fullName evidence="1">Polydeoxyribonucleotide synthase [NAD(+)]</fullName>
    </alternativeName>
</protein>
<comment type="function">
    <text evidence="1">DNA ligase that catalyzes the formation of phosphodiester linkages between 5'-phosphoryl and 3'-hydroxyl groups in double-stranded DNA using NAD as a coenzyme and as the energy source for the reaction. It is essential for DNA replication and repair of damaged DNA.</text>
</comment>
<comment type="catalytic activity">
    <reaction evidence="1">
        <text>NAD(+) + (deoxyribonucleotide)n-3'-hydroxyl + 5'-phospho-(deoxyribonucleotide)m = (deoxyribonucleotide)n+m + AMP + beta-nicotinamide D-nucleotide.</text>
        <dbReference type="EC" id="6.5.1.2"/>
    </reaction>
</comment>
<comment type="cofactor">
    <cofactor evidence="1">
        <name>Mg(2+)</name>
        <dbReference type="ChEBI" id="CHEBI:18420"/>
    </cofactor>
    <cofactor evidence="1">
        <name>Mn(2+)</name>
        <dbReference type="ChEBI" id="CHEBI:29035"/>
    </cofactor>
</comment>
<comment type="similarity">
    <text evidence="1">Belongs to the NAD-dependent DNA ligase family. LigA subfamily.</text>
</comment>
<proteinExistence type="inferred from homology"/>
<gene>
    <name evidence="1" type="primary">ligA</name>
    <name type="ordered locus">BLD_0066</name>
</gene>
<reference key="1">
    <citation type="journal article" date="2008" name="BMC Genomics">
        <title>Comparative genomic analysis of the gut bacterium Bifidobacterium longum reveals loci susceptible to deletion during pure culture growth.</title>
        <authorList>
            <person name="Lee J.H."/>
            <person name="Karamychev V.N."/>
            <person name="Kozyavkin S.A."/>
            <person name="Mills D."/>
            <person name="Pavlov A.R."/>
            <person name="Pavlova N.V."/>
            <person name="Polouchine N.N."/>
            <person name="Richardson P.M."/>
            <person name="Shakhova V.V."/>
            <person name="Slesarev A.I."/>
            <person name="Weimer B."/>
            <person name="O'Sullivan D.J."/>
        </authorList>
    </citation>
    <scope>NUCLEOTIDE SEQUENCE [LARGE SCALE GENOMIC DNA]</scope>
    <source>
        <strain>DJO10A</strain>
    </source>
</reference>
<keyword id="KW-0227">DNA damage</keyword>
<keyword id="KW-0234">DNA repair</keyword>
<keyword id="KW-0235">DNA replication</keyword>
<keyword id="KW-0436">Ligase</keyword>
<keyword id="KW-0460">Magnesium</keyword>
<keyword id="KW-0464">Manganese</keyword>
<keyword id="KW-0479">Metal-binding</keyword>
<keyword id="KW-0520">NAD</keyword>
<keyword id="KW-0862">Zinc</keyword>
<accession>B3DPR8</accession>
<feature type="chain" id="PRO_0000380308" description="DNA ligase">
    <location>
        <begin position="1"/>
        <end position="920"/>
    </location>
</feature>
<feature type="domain" description="BRCT" evidence="1">
    <location>
        <begin position="839"/>
        <end position="920"/>
    </location>
</feature>
<feature type="region of interest" description="Disordered" evidence="2">
    <location>
        <begin position="662"/>
        <end position="691"/>
    </location>
</feature>
<feature type="compositionally biased region" description="Polar residues" evidence="2">
    <location>
        <begin position="669"/>
        <end position="682"/>
    </location>
</feature>
<feature type="active site" description="N6-AMP-lysine intermediate" evidence="1">
    <location>
        <position position="175"/>
    </location>
</feature>
<feature type="binding site" evidence="1">
    <location>
        <begin position="90"/>
        <end position="94"/>
    </location>
    <ligand>
        <name>NAD(+)</name>
        <dbReference type="ChEBI" id="CHEBI:57540"/>
    </ligand>
</feature>
<feature type="binding site" evidence="1">
    <location>
        <begin position="139"/>
        <end position="140"/>
    </location>
    <ligand>
        <name>NAD(+)</name>
        <dbReference type="ChEBI" id="CHEBI:57540"/>
    </ligand>
</feature>
<feature type="binding site" evidence="1">
    <location>
        <position position="173"/>
    </location>
    <ligand>
        <name>NAD(+)</name>
        <dbReference type="ChEBI" id="CHEBI:57540"/>
    </ligand>
</feature>
<feature type="binding site" evidence="1">
    <location>
        <position position="196"/>
    </location>
    <ligand>
        <name>NAD(+)</name>
        <dbReference type="ChEBI" id="CHEBI:57540"/>
    </ligand>
</feature>
<feature type="binding site" evidence="1">
    <location>
        <position position="235"/>
    </location>
    <ligand>
        <name>NAD(+)</name>
        <dbReference type="ChEBI" id="CHEBI:57540"/>
    </ligand>
</feature>
<feature type="binding site" evidence="1">
    <location>
        <position position="360"/>
    </location>
    <ligand>
        <name>NAD(+)</name>
        <dbReference type="ChEBI" id="CHEBI:57540"/>
    </ligand>
</feature>
<feature type="binding site" evidence="1">
    <location>
        <position position="384"/>
    </location>
    <ligand>
        <name>NAD(+)</name>
        <dbReference type="ChEBI" id="CHEBI:57540"/>
    </ligand>
</feature>
<feature type="binding site" evidence="1">
    <location>
        <position position="481"/>
    </location>
    <ligand>
        <name>Zn(2+)</name>
        <dbReference type="ChEBI" id="CHEBI:29105"/>
    </ligand>
</feature>
<feature type="binding site" evidence="1">
    <location>
        <position position="484"/>
    </location>
    <ligand>
        <name>Zn(2+)</name>
        <dbReference type="ChEBI" id="CHEBI:29105"/>
    </ligand>
</feature>
<feature type="binding site" evidence="1">
    <location>
        <position position="500"/>
    </location>
    <ligand>
        <name>Zn(2+)</name>
        <dbReference type="ChEBI" id="CHEBI:29105"/>
    </ligand>
</feature>
<feature type="binding site" evidence="1">
    <location>
        <position position="506"/>
    </location>
    <ligand>
        <name>Zn(2+)</name>
        <dbReference type="ChEBI" id="CHEBI:29105"/>
    </ligand>
</feature>
<sequence length="920" mass="99885">MSTNEQLAWDFDDGDVAAVRPDTGIARFAPGSEQWIAALQPTDDDAIRLDRFDVNMMTAEAAARLWARVAAWVESDQIAYYIDDSPVSSDAAYDARMRCLERLEAAFPSLDNPQSPTHRVGGSFSNDFTSVRHPSRMMSLDDVFSIEELKDWYDSVIRDLDWPESKPLPMSCEVKIDGLALNLIYRNGVLEQGLTRGDGVTGEDITLNVRTIGSIPANLGGPKEDVPDFVEIRGEVFMRWDDFHTLNNEQEDAGRAPFANPRNAAAGSLRQKDPRITATRRLSFYAHGLGQLTWGPDHPRGTHDVVADQSQAYDLYTKWGVPVSPHNRAVTSFQEILDMIEYYGEHRGDIEHALDGIVVKVDDLGLQRTLGATSRAPRWAIAYKYPPEEVNTELLNITVQVGRTGRVTPVAVLKPVYVAGSTVARTTLHNGFEVKRKGILIGDTVVVRKAGDVIPELVGPVLERRKGREDQLREFVMPEFCPSCGAKLSPAKEGDKDIRCPNVESCPAQLTERVISLASRKAFDIEHLGEQSAIALTNPEENRPDSVATYAPNITEVLVAPGEEPDPYEPVEGLELPAAQKPVLSNESGLFNLTAADLRDVRVWREAAIVEVHETVGANGKKKKVRKRVGGSGLWHQVPAFWTAPTPAKKLTAKQLVERAQGEAAIESAETQGDTASETTGAPTGAEAPLGTMPGFAAASYPEYDVPADAVIVRVDHKTTRTGVTDVPVIIRPGENTRKMFDEMDKARHADLWRVLVALSIRRLGPPTARLIASAMGSLAAIENATIEDLTAIDGVGPEIAESVVNWFAATREPGDWRGATLRAWQAAGVGVDEAETSSLPQTLAGKTVVVTGSLEGYSRDSAKEAIIERGGKAAGSVSKKTDYVVIGANAGSKAAKAEELGIPMLSETQFAQLLATGTI</sequence>